<reference key="1">
    <citation type="journal article" date="2002" name="Nature">
        <title>Sequence and analysis of chromosome 2 of Dictyostelium discoideum.</title>
        <authorList>
            <person name="Gloeckner G."/>
            <person name="Eichinger L."/>
            <person name="Szafranski K."/>
            <person name="Pachebat J.A."/>
            <person name="Bankier A.T."/>
            <person name="Dear P.H."/>
            <person name="Lehmann R."/>
            <person name="Baumgart C."/>
            <person name="Parra G."/>
            <person name="Abril J.F."/>
            <person name="Guigo R."/>
            <person name="Kumpf K."/>
            <person name="Tunggal B."/>
            <person name="Cox E.C."/>
            <person name="Quail M.A."/>
            <person name="Platzer M."/>
            <person name="Rosenthal A."/>
            <person name="Noegel A.A."/>
        </authorList>
    </citation>
    <scope>NUCLEOTIDE SEQUENCE [LARGE SCALE GENOMIC DNA]</scope>
    <source>
        <strain>AX4</strain>
    </source>
</reference>
<reference key="2">
    <citation type="journal article" date="2005" name="Nature">
        <title>The genome of the social amoeba Dictyostelium discoideum.</title>
        <authorList>
            <person name="Eichinger L."/>
            <person name="Pachebat J.A."/>
            <person name="Gloeckner G."/>
            <person name="Rajandream M.A."/>
            <person name="Sucgang R."/>
            <person name="Berriman M."/>
            <person name="Song J."/>
            <person name="Olsen R."/>
            <person name="Szafranski K."/>
            <person name="Xu Q."/>
            <person name="Tunggal B."/>
            <person name="Kummerfeld S."/>
            <person name="Madera M."/>
            <person name="Konfortov B.A."/>
            <person name="Rivero F."/>
            <person name="Bankier A.T."/>
            <person name="Lehmann R."/>
            <person name="Hamlin N."/>
            <person name="Davies R."/>
            <person name="Gaudet P."/>
            <person name="Fey P."/>
            <person name="Pilcher K."/>
            <person name="Chen G."/>
            <person name="Saunders D."/>
            <person name="Sodergren E.J."/>
            <person name="Davis P."/>
            <person name="Kerhornou A."/>
            <person name="Nie X."/>
            <person name="Hall N."/>
            <person name="Anjard C."/>
            <person name="Hemphill L."/>
            <person name="Bason N."/>
            <person name="Farbrother P."/>
            <person name="Desany B."/>
            <person name="Just E."/>
            <person name="Morio T."/>
            <person name="Rost R."/>
            <person name="Churcher C.M."/>
            <person name="Cooper J."/>
            <person name="Haydock S."/>
            <person name="van Driessche N."/>
            <person name="Cronin A."/>
            <person name="Goodhead I."/>
            <person name="Muzny D.M."/>
            <person name="Mourier T."/>
            <person name="Pain A."/>
            <person name="Lu M."/>
            <person name="Harper D."/>
            <person name="Lindsay R."/>
            <person name="Hauser H."/>
            <person name="James K.D."/>
            <person name="Quiles M."/>
            <person name="Madan Babu M."/>
            <person name="Saito T."/>
            <person name="Buchrieser C."/>
            <person name="Wardroper A."/>
            <person name="Felder M."/>
            <person name="Thangavelu M."/>
            <person name="Johnson D."/>
            <person name="Knights A."/>
            <person name="Loulseged H."/>
            <person name="Mungall K.L."/>
            <person name="Oliver K."/>
            <person name="Price C."/>
            <person name="Quail M.A."/>
            <person name="Urushihara H."/>
            <person name="Hernandez J."/>
            <person name="Rabbinowitsch E."/>
            <person name="Steffen D."/>
            <person name="Sanders M."/>
            <person name="Ma J."/>
            <person name="Kohara Y."/>
            <person name="Sharp S."/>
            <person name="Simmonds M.N."/>
            <person name="Spiegler S."/>
            <person name="Tivey A."/>
            <person name="Sugano S."/>
            <person name="White B."/>
            <person name="Walker D."/>
            <person name="Woodward J.R."/>
            <person name="Winckler T."/>
            <person name="Tanaka Y."/>
            <person name="Shaulsky G."/>
            <person name="Schleicher M."/>
            <person name="Weinstock G.M."/>
            <person name="Rosenthal A."/>
            <person name="Cox E.C."/>
            <person name="Chisholm R.L."/>
            <person name="Gibbs R.A."/>
            <person name="Loomis W.F."/>
            <person name="Platzer M."/>
            <person name="Kay R.R."/>
            <person name="Williams J.G."/>
            <person name="Dear P.H."/>
            <person name="Noegel A.A."/>
            <person name="Barrell B.G."/>
            <person name="Kuspa A."/>
        </authorList>
    </citation>
    <scope>NUCLEOTIDE SEQUENCE [LARGE SCALE GENOMIC DNA]</scope>
    <source>
        <strain>AX4</strain>
    </source>
</reference>
<evidence type="ECO:0000305" key="1"/>
<organism>
    <name type="scientific">Dictyostelium discoideum</name>
    <name type="common">Social amoeba</name>
    <dbReference type="NCBI Taxonomy" id="44689"/>
    <lineage>
        <taxon>Eukaryota</taxon>
        <taxon>Amoebozoa</taxon>
        <taxon>Evosea</taxon>
        <taxon>Eumycetozoa</taxon>
        <taxon>Dictyostelia</taxon>
        <taxon>Dictyosteliales</taxon>
        <taxon>Dictyosteliaceae</taxon>
        <taxon>Dictyostelium</taxon>
    </lineage>
</organism>
<feature type="chain" id="PRO_0000350743" description="Glutathione S-transferase domain-containing protein DDB_G0273153/DDB_G0273923">
    <location>
        <begin position="1"/>
        <end position="200"/>
    </location>
</feature>
<feature type="domain" description="GST N-terminal">
    <location>
        <begin position="1"/>
        <end position="71"/>
    </location>
</feature>
<feature type="domain" description="GST C-terminal">
    <location>
        <begin position="73"/>
        <end position="195"/>
    </location>
</feature>
<proteinExistence type="inferred from homology"/>
<protein>
    <recommendedName>
        <fullName>Glutathione S-transferase domain-containing protein DDB_G0273153/DDB_G0273923</fullName>
    </recommendedName>
</protein>
<keyword id="KW-1185">Reference proteome</keyword>
<gene>
    <name type="ORF">DDB_G0273153</name>
</gene>
<gene>
    <name type="ORF">DDB_G0273923</name>
</gene>
<accession>Q556P3</accession>
<accession>Q86JY5</accession>
<comment type="similarity">
    <text evidence="1">Belongs to the GST superfamily.</text>
</comment>
<comment type="caution">
    <text evidence="1">The gene for this protein is duplicated in strains AX3 and AX4. These strains contain a duplication of a segment of 750 kb of chromosome 2 compared to the corresponding sequence in strain AX2.</text>
</comment>
<dbReference type="EMBL" id="AAFI02000011">
    <property type="protein sequence ID" value="EAL70652.2"/>
    <property type="molecule type" value="Genomic_DNA"/>
</dbReference>
<dbReference type="EMBL" id="AAFI02000009">
    <property type="protein sequence ID" value="EAL70794.2"/>
    <property type="molecule type" value="Genomic_DNA"/>
</dbReference>
<dbReference type="RefSeq" id="XP_644578.3">
    <property type="nucleotide sequence ID" value="XM_639486.2"/>
</dbReference>
<dbReference type="RefSeq" id="XP_644673.4">
    <property type="nucleotide sequence ID" value="XM_639581.2"/>
</dbReference>
<dbReference type="SMR" id="Q556P3"/>
<dbReference type="FunCoup" id="Q556P3">
    <property type="interactions" value="1"/>
</dbReference>
<dbReference type="STRING" id="44689.Q556P3"/>
<dbReference type="PaxDb" id="44689-DDB0305017"/>
<dbReference type="GeneID" id="8618767"/>
<dbReference type="GeneID" id="8619209"/>
<dbReference type="KEGG" id="ddi:DDB_G0273153"/>
<dbReference type="KEGG" id="ddi:DDB_G0273923"/>
<dbReference type="dictyBase" id="DDB_G0273153"/>
<dbReference type="dictyBase" id="DDB_G0273923"/>
<dbReference type="VEuPathDB" id="AmoebaDB:DDB_G0273923"/>
<dbReference type="eggNOG" id="KOG1695">
    <property type="taxonomic scope" value="Eukaryota"/>
</dbReference>
<dbReference type="HOGENOM" id="CLU_039475_1_0_1"/>
<dbReference type="InParanoid" id="Q556P3"/>
<dbReference type="OMA" id="IKHEINQ"/>
<dbReference type="PhylomeDB" id="Q556P3"/>
<dbReference type="Reactome" id="R-DDI-156590">
    <property type="pathway name" value="Glutathione conjugation"/>
</dbReference>
<dbReference type="Reactome" id="R-DDI-189483">
    <property type="pathway name" value="Heme degradation"/>
</dbReference>
<dbReference type="Reactome" id="R-DDI-3299685">
    <property type="pathway name" value="Detoxification of Reactive Oxygen Species"/>
</dbReference>
<dbReference type="Reactome" id="R-DDI-6798695">
    <property type="pathway name" value="Neutrophil degranulation"/>
</dbReference>
<dbReference type="Reactome" id="R-DDI-9748787">
    <property type="pathway name" value="Azathioprine ADME"/>
</dbReference>
<dbReference type="Reactome" id="R-DDI-9753281">
    <property type="pathway name" value="Paracetamol ADME"/>
</dbReference>
<dbReference type="PRO" id="PR:Q556P3"/>
<dbReference type="Proteomes" id="UP000002195">
    <property type="component" value="Chromosome 2"/>
</dbReference>
<dbReference type="GO" id="GO:0004364">
    <property type="term" value="F:glutathione transferase activity"/>
    <property type="evidence" value="ECO:0000318"/>
    <property type="project" value="GO_Central"/>
</dbReference>
<dbReference type="GO" id="GO:0006749">
    <property type="term" value="P:glutathione metabolic process"/>
    <property type="evidence" value="ECO:0000318"/>
    <property type="project" value="GO_Central"/>
</dbReference>
<dbReference type="FunFam" id="1.20.1050.130:FF:000014">
    <property type="entry name" value="Putative glutathione S-transferase alpha-5"/>
    <property type="match status" value="1"/>
</dbReference>
<dbReference type="Gene3D" id="1.20.1050.130">
    <property type="match status" value="1"/>
</dbReference>
<dbReference type="InterPro" id="IPR010987">
    <property type="entry name" value="Glutathione-S-Trfase_C-like"/>
</dbReference>
<dbReference type="InterPro" id="IPR036282">
    <property type="entry name" value="Glutathione-S-Trfase_C_sf"/>
</dbReference>
<dbReference type="InterPro" id="IPR004045">
    <property type="entry name" value="Glutathione_S-Trfase_N"/>
</dbReference>
<dbReference type="InterPro" id="IPR004046">
    <property type="entry name" value="GST_C"/>
</dbReference>
<dbReference type="InterPro" id="IPR050213">
    <property type="entry name" value="GST_superfamily"/>
</dbReference>
<dbReference type="PANTHER" id="PTHR11571">
    <property type="entry name" value="GLUTATHIONE S-TRANSFERASE"/>
    <property type="match status" value="1"/>
</dbReference>
<dbReference type="PANTHER" id="PTHR11571:SF116">
    <property type="entry name" value="GLUTATHIONE S-TRANSFERASE DOMAIN-CONTAINING PROTEIN DDB_G0273153_DDB_G0273923"/>
    <property type="match status" value="1"/>
</dbReference>
<dbReference type="Pfam" id="PF14497">
    <property type="entry name" value="GST_C_3"/>
    <property type="match status" value="1"/>
</dbReference>
<dbReference type="SUPFAM" id="SSF47616">
    <property type="entry name" value="GST C-terminal domain-like"/>
    <property type="match status" value="1"/>
</dbReference>
<dbReference type="PROSITE" id="PS50405">
    <property type="entry name" value="GST_CTER"/>
    <property type="match status" value="1"/>
</dbReference>
<dbReference type="PROSITE" id="PS50404">
    <property type="entry name" value="GST_NTER"/>
    <property type="match status" value="1"/>
</dbReference>
<sequence length="200" mass="23232">MISSIYIFKILLSYLGVEYEINQLSEINQEFTNKLESYNQFIKHTQKDEDYLLGQSAVISRYISNNHNFSGKSLQESARVDDIVESVLEIIEEYVLPIINSNIINEEITKLLCTHFNDFENQLSKSTFSAGDSTTLADLYLFILYDITLRYLENHGHLAHHFNEKYPHLERLKLHFLSNKSVSEFINSNNINSQSSQLII</sequence>
<name>Y1436_DICDI</name>